<evidence type="ECO:0000305" key="1"/>
<evidence type="ECO:0007829" key="2">
    <source>
        <dbReference type="PDB" id="1VMO"/>
    </source>
</evidence>
<sequence length="183" mass="20234">MKVLTPAALILLFFFYTVDARTREYTSVITVPNGGHWGKWGIRQFCHSGYANGFALKVEPSQFGRDDTALNGIRLRCLDGSVIESLVGKWGTWTSFLVCPTGYLVSFSLRSEKSQGGGDDTAANNIQFRCSDEAVLVGDGLSWGRFGPWSKRCKICGLQTKVESPQGLRDDTALNNVRFFCCK</sequence>
<dbReference type="EMBL" id="D26093">
    <property type="protein sequence ID" value="BAA05086.1"/>
    <property type="molecule type" value="mRNA"/>
</dbReference>
<dbReference type="PIR" id="I50442">
    <property type="entry name" value="I50442"/>
</dbReference>
<dbReference type="RefSeq" id="NP_001161233.1">
    <property type="nucleotide sequence ID" value="NM_001167761.2"/>
</dbReference>
<dbReference type="PDB" id="1VMO">
    <property type="method" value="X-ray"/>
    <property type="resolution" value="2.20 A"/>
    <property type="chains" value="A/B=21-183"/>
</dbReference>
<dbReference type="PDBsum" id="1VMO"/>
<dbReference type="SMR" id="P41366"/>
<dbReference type="FunCoup" id="P41366">
    <property type="interactions" value="46"/>
</dbReference>
<dbReference type="STRING" id="9031.ENSGALP00000029440"/>
<dbReference type="PaxDb" id="9031-ENSGALP00000029440"/>
<dbReference type="Ensembl" id="ENSGALT00010012157.1">
    <property type="protein sequence ID" value="ENSGALP00010006783.1"/>
    <property type="gene ID" value="ENSGALG00010005161.1"/>
</dbReference>
<dbReference type="GeneID" id="418974"/>
<dbReference type="KEGG" id="gga:418974"/>
<dbReference type="CTD" id="284013"/>
<dbReference type="VEuPathDB" id="HostDB:geneid_418974"/>
<dbReference type="eggNOG" id="ENOG502S24T">
    <property type="taxonomic scope" value="Eukaryota"/>
</dbReference>
<dbReference type="GeneTree" id="ENSGT00390000009313"/>
<dbReference type="HOGENOM" id="CLU_111176_1_0_1"/>
<dbReference type="InParanoid" id="P41366"/>
<dbReference type="OMA" id="EYTSVIT"/>
<dbReference type="OrthoDB" id="6344411at2759"/>
<dbReference type="PhylomeDB" id="P41366"/>
<dbReference type="TreeFam" id="TF315374"/>
<dbReference type="EvolutionaryTrace" id="P41366"/>
<dbReference type="PRO" id="PR:P41366"/>
<dbReference type="Proteomes" id="UP000000539">
    <property type="component" value="Chromosome 1"/>
</dbReference>
<dbReference type="Bgee" id="ENSGALG00000017172">
    <property type="expression patterns" value="Expressed in ovary"/>
</dbReference>
<dbReference type="GO" id="GO:0005615">
    <property type="term" value="C:extracellular space"/>
    <property type="evidence" value="ECO:0000314"/>
    <property type="project" value="AgBase"/>
</dbReference>
<dbReference type="CDD" id="cd00220">
    <property type="entry name" value="VMO-I"/>
    <property type="match status" value="1"/>
</dbReference>
<dbReference type="FunFam" id="2.100.10.20:FF:000001">
    <property type="entry name" value="Vitelline membrane outer layer 1 homolog"/>
    <property type="match status" value="1"/>
</dbReference>
<dbReference type="Gene3D" id="2.100.10.20">
    <property type="entry name" value="Vitelline membrane outer layer protein I (VOMI)"/>
    <property type="match status" value="1"/>
</dbReference>
<dbReference type="InterPro" id="IPR005515">
    <property type="entry name" value="VOMI"/>
</dbReference>
<dbReference type="InterPro" id="IPR036706">
    <property type="entry name" value="VOMI_sf"/>
</dbReference>
<dbReference type="PANTHER" id="PTHR18841:SF2">
    <property type="entry name" value="VITELLINE MEMBRANE OUTER LAYER PROTEIN 1 HOMOLOG"/>
    <property type="match status" value="1"/>
</dbReference>
<dbReference type="PANTHER" id="PTHR18841">
    <property type="entry name" value="VITELLINE MEMBRANE OUTER LAYER PROTEIN I-RELATED"/>
    <property type="match status" value="1"/>
</dbReference>
<dbReference type="Pfam" id="PF03762">
    <property type="entry name" value="VOMI"/>
    <property type="match status" value="1"/>
</dbReference>
<dbReference type="SUPFAM" id="SSF51092">
    <property type="entry name" value="Vitelline membrane outer protein-I (VMO-I)"/>
    <property type="match status" value="1"/>
</dbReference>
<comment type="function">
    <text>Exact function not known, component of the outer membrane of the vitelline layer of the egg. Seems to be able to synthesize N-acetylchito-oligosaccharides (n=14-15) from hexasaccharides of N-acetylglucosamine in a manner similar to the transferase activity of lysozyme.</text>
</comment>
<comment type="subcellular location">
    <subcellularLocation>
        <location>Secreted</location>
    </subcellularLocation>
</comment>
<comment type="similarity">
    <text evidence="1">Belongs to the VMO1 family.</text>
</comment>
<name>VMO1_CHICK</name>
<keyword id="KW-0002">3D-structure</keyword>
<keyword id="KW-1015">Disulfide bond</keyword>
<keyword id="KW-1185">Reference proteome</keyword>
<keyword id="KW-0964">Secreted</keyword>
<keyword id="KW-0732">Signal</keyword>
<feature type="signal peptide">
    <location>
        <begin position="1"/>
        <end position="20"/>
    </location>
</feature>
<feature type="chain" id="PRO_0000036406" description="Vitelline membrane outer layer protein 1">
    <location>
        <begin position="21"/>
        <end position="183"/>
    </location>
</feature>
<feature type="disulfide bond">
    <location>
        <begin position="46"/>
        <end position="77"/>
    </location>
</feature>
<feature type="disulfide bond">
    <location>
        <begin position="99"/>
        <end position="130"/>
    </location>
</feature>
<feature type="disulfide bond">
    <location>
        <begin position="153"/>
        <end position="181"/>
    </location>
</feature>
<feature type="disulfide bond">
    <location>
        <begin position="156"/>
        <end position="182"/>
    </location>
</feature>
<feature type="strand" evidence="2">
    <location>
        <begin position="26"/>
        <end position="29"/>
    </location>
</feature>
<feature type="strand" evidence="2">
    <location>
        <begin position="32"/>
        <end position="34"/>
    </location>
</feature>
<feature type="strand" evidence="2">
    <location>
        <begin position="38"/>
        <end position="40"/>
    </location>
</feature>
<feature type="strand" evidence="2">
    <location>
        <begin position="47"/>
        <end position="49"/>
    </location>
</feature>
<feature type="strand" evidence="2">
    <location>
        <begin position="51"/>
        <end position="58"/>
    </location>
</feature>
<feature type="strand" evidence="2">
    <location>
        <begin position="63"/>
        <end position="65"/>
    </location>
</feature>
<feature type="strand" evidence="2">
    <location>
        <begin position="72"/>
        <end position="77"/>
    </location>
</feature>
<feature type="strand" evidence="2">
    <location>
        <begin position="89"/>
        <end position="93"/>
    </location>
</feature>
<feature type="strand" evidence="2">
    <location>
        <begin position="100"/>
        <end position="102"/>
    </location>
</feature>
<feature type="strand" evidence="2">
    <location>
        <begin position="104"/>
        <end position="111"/>
    </location>
</feature>
<feature type="strand" evidence="2">
    <location>
        <begin position="125"/>
        <end position="130"/>
    </location>
</feature>
<feature type="strand" evidence="2">
    <location>
        <begin position="135"/>
        <end position="137"/>
    </location>
</feature>
<feature type="strand" evidence="2">
    <location>
        <begin position="144"/>
        <end position="146"/>
    </location>
</feature>
<feature type="strand" evidence="2">
    <location>
        <begin position="155"/>
        <end position="164"/>
    </location>
</feature>
<feature type="turn" evidence="2">
    <location>
        <begin position="169"/>
        <end position="171"/>
    </location>
</feature>
<feature type="strand" evidence="2">
    <location>
        <begin position="173"/>
        <end position="181"/>
    </location>
</feature>
<organism>
    <name type="scientific">Gallus gallus</name>
    <name type="common">Chicken</name>
    <dbReference type="NCBI Taxonomy" id="9031"/>
    <lineage>
        <taxon>Eukaryota</taxon>
        <taxon>Metazoa</taxon>
        <taxon>Chordata</taxon>
        <taxon>Craniata</taxon>
        <taxon>Vertebrata</taxon>
        <taxon>Euteleostomi</taxon>
        <taxon>Archelosauria</taxon>
        <taxon>Archosauria</taxon>
        <taxon>Dinosauria</taxon>
        <taxon>Saurischia</taxon>
        <taxon>Theropoda</taxon>
        <taxon>Coelurosauria</taxon>
        <taxon>Aves</taxon>
        <taxon>Neognathae</taxon>
        <taxon>Galloanserae</taxon>
        <taxon>Galliformes</taxon>
        <taxon>Phasianidae</taxon>
        <taxon>Phasianinae</taxon>
        <taxon>Gallus</taxon>
    </lineage>
</organism>
<accession>P41366</accession>
<protein>
    <recommendedName>
        <fullName>Vitelline membrane outer layer protein 1</fullName>
        <shortName>VMO-1</shortName>
        <shortName>VMO-I</shortName>
        <shortName>VMOI</shortName>
    </recommendedName>
</protein>
<gene>
    <name type="primary">VMO1</name>
</gene>
<reference key="1">
    <citation type="journal article" date="1994" name="Gene">
        <title>Cloning and sequencing of hen magnum cDNAs encoding vitelline membrane outer layer protein I (VMO-I).</title>
        <authorList>
            <person name="Uyeda A."/>
            <person name="Inuzuka C."/>
            <person name="Doi Y."/>
            <person name="Kido S."/>
            <person name="Kikuchi M."/>
        </authorList>
    </citation>
    <scope>NUCLEOTIDE SEQUENCE [MRNA]</scope>
    <source>
        <tissue>Oviduct</tissue>
    </source>
</reference>
<reference key="2">
    <citation type="journal article" date="1994" name="EMBO J.">
        <title>Crystal structure of vitelline membrane outer layer protein I (VMO-I): a folding motif with homologous Greek key structures related by an internal three-fold symmetry.</title>
        <authorList>
            <person name="Shimizu T."/>
            <person name="Vassylyev D.G."/>
            <person name="Kido S."/>
            <person name="Doi Y."/>
            <person name="Morikawa K."/>
        </authorList>
    </citation>
    <scope>X-RAY CRYSTALLOGRAPHY (2.2 ANGSTROMS)</scope>
</reference>
<reference key="3">
    <citation type="journal article" date="1996" name="Trends Biochem. Sci.">
        <title>The beta-prism: a new folding motif.</title>
        <authorList>
            <person name="Shimizu T."/>
            <person name="Morikawa K."/>
        </authorList>
    </citation>
    <scope>REVIEW</scope>
</reference>
<proteinExistence type="evidence at protein level"/>